<dbReference type="EC" id="3.6.5.-" evidence="1"/>
<dbReference type="EMBL" id="LT708304">
    <property type="protein sequence ID" value="SIU01082.1"/>
    <property type="molecule type" value="Genomic_DNA"/>
</dbReference>
<dbReference type="RefSeq" id="NP_856114.1">
    <property type="nucleotide sequence ID" value="NC_002945.3"/>
</dbReference>
<dbReference type="SMR" id="Q7TYK5"/>
<dbReference type="KEGG" id="mbo:BQ2027_MB2467C"/>
<dbReference type="PATRIC" id="fig|233413.5.peg.2715"/>
<dbReference type="Proteomes" id="UP000001419">
    <property type="component" value="Chromosome"/>
</dbReference>
<dbReference type="GO" id="GO:0005737">
    <property type="term" value="C:cytoplasm"/>
    <property type="evidence" value="ECO:0007669"/>
    <property type="project" value="UniProtKB-SubCell"/>
</dbReference>
<dbReference type="GO" id="GO:0005525">
    <property type="term" value="F:GTP binding"/>
    <property type="evidence" value="ECO:0007669"/>
    <property type="project" value="UniProtKB-UniRule"/>
</dbReference>
<dbReference type="GO" id="GO:0003924">
    <property type="term" value="F:GTPase activity"/>
    <property type="evidence" value="ECO:0007669"/>
    <property type="project" value="UniProtKB-UniRule"/>
</dbReference>
<dbReference type="GO" id="GO:0000287">
    <property type="term" value="F:magnesium ion binding"/>
    <property type="evidence" value="ECO:0007669"/>
    <property type="project" value="InterPro"/>
</dbReference>
<dbReference type="GO" id="GO:0042254">
    <property type="term" value="P:ribosome biogenesis"/>
    <property type="evidence" value="ECO:0007669"/>
    <property type="project" value="UniProtKB-UniRule"/>
</dbReference>
<dbReference type="CDD" id="cd01898">
    <property type="entry name" value="Obg"/>
    <property type="match status" value="1"/>
</dbReference>
<dbReference type="FunFam" id="2.70.210.12:FF:000001">
    <property type="entry name" value="GTPase Obg"/>
    <property type="match status" value="1"/>
</dbReference>
<dbReference type="FunFam" id="3.30.300.350:FF:000002">
    <property type="entry name" value="GTPase Obg"/>
    <property type="match status" value="1"/>
</dbReference>
<dbReference type="FunFam" id="3.40.50.300:FF:000515">
    <property type="entry name" value="GTPase Obg"/>
    <property type="match status" value="1"/>
</dbReference>
<dbReference type="Gene3D" id="3.30.300.350">
    <property type="entry name" value="GTP-binding protein OBG, C-terminal domain"/>
    <property type="match status" value="1"/>
</dbReference>
<dbReference type="Gene3D" id="2.70.210.12">
    <property type="entry name" value="GTP1/OBG domain"/>
    <property type="match status" value="1"/>
</dbReference>
<dbReference type="Gene3D" id="3.40.50.300">
    <property type="entry name" value="P-loop containing nucleotide triphosphate hydrolases"/>
    <property type="match status" value="1"/>
</dbReference>
<dbReference type="HAMAP" id="MF_01454">
    <property type="entry name" value="GTPase_Obg"/>
    <property type="match status" value="1"/>
</dbReference>
<dbReference type="InterPro" id="IPR031167">
    <property type="entry name" value="G_OBG"/>
</dbReference>
<dbReference type="InterPro" id="IPR006073">
    <property type="entry name" value="GTP-bd"/>
</dbReference>
<dbReference type="InterPro" id="IPR014100">
    <property type="entry name" value="GTP-bd_Obg/CgtA"/>
</dbReference>
<dbReference type="InterPro" id="IPR036346">
    <property type="entry name" value="GTP-bd_prot_GTP1/OBG_C_sf"/>
</dbReference>
<dbReference type="InterPro" id="IPR006074">
    <property type="entry name" value="GTP1-OBG_CS"/>
</dbReference>
<dbReference type="InterPro" id="IPR006169">
    <property type="entry name" value="GTP1_OBG_dom"/>
</dbReference>
<dbReference type="InterPro" id="IPR036726">
    <property type="entry name" value="GTP1_OBG_dom_sf"/>
</dbReference>
<dbReference type="InterPro" id="IPR045086">
    <property type="entry name" value="OBG_GTPase"/>
</dbReference>
<dbReference type="InterPro" id="IPR015349">
    <property type="entry name" value="OCT_dom"/>
</dbReference>
<dbReference type="InterPro" id="IPR027417">
    <property type="entry name" value="P-loop_NTPase"/>
</dbReference>
<dbReference type="NCBIfam" id="TIGR02729">
    <property type="entry name" value="Obg_CgtA"/>
    <property type="match status" value="1"/>
</dbReference>
<dbReference type="NCBIfam" id="TIGR03595">
    <property type="entry name" value="Obg_CgtA_exten"/>
    <property type="match status" value="1"/>
</dbReference>
<dbReference type="NCBIfam" id="NF008954">
    <property type="entry name" value="PRK12296.1"/>
    <property type="match status" value="1"/>
</dbReference>
<dbReference type="NCBIfam" id="NF008955">
    <property type="entry name" value="PRK12297.1"/>
    <property type="match status" value="1"/>
</dbReference>
<dbReference type="NCBIfam" id="NF008956">
    <property type="entry name" value="PRK12299.1"/>
    <property type="match status" value="1"/>
</dbReference>
<dbReference type="PANTHER" id="PTHR11702">
    <property type="entry name" value="DEVELOPMENTALLY REGULATED GTP-BINDING PROTEIN-RELATED"/>
    <property type="match status" value="1"/>
</dbReference>
<dbReference type="PANTHER" id="PTHR11702:SF31">
    <property type="entry name" value="MITOCHONDRIAL RIBOSOME-ASSOCIATED GTPASE 2"/>
    <property type="match status" value="1"/>
</dbReference>
<dbReference type="Pfam" id="PF09269">
    <property type="entry name" value="DUF1967"/>
    <property type="match status" value="1"/>
</dbReference>
<dbReference type="Pfam" id="PF01018">
    <property type="entry name" value="GTP1_OBG"/>
    <property type="match status" value="1"/>
</dbReference>
<dbReference type="Pfam" id="PF01926">
    <property type="entry name" value="MMR_HSR1"/>
    <property type="match status" value="1"/>
</dbReference>
<dbReference type="PRINTS" id="PR00326">
    <property type="entry name" value="GTP1OBG"/>
</dbReference>
<dbReference type="SUPFAM" id="SSF102741">
    <property type="entry name" value="Obg GTP-binding protein C-terminal domain"/>
    <property type="match status" value="1"/>
</dbReference>
<dbReference type="SUPFAM" id="SSF82051">
    <property type="entry name" value="Obg GTP-binding protein N-terminal domain"/>
    <property type="match status" value="1"/>
</dbReference>
<dbReference type="SUPFAM" id="SSF52540">
    <property type="entry name" value="P-loop containing nucleoside triphosphate hydrolases"/>
    <property type="match status" value="1"/>
</dbReference>
<dbReference type="PROSITE" id="PS51710">
    <property type="entry name" value="G_OBG"/>
    <property type="match status" value="1"/>
</dbReference>
<dbReference type="PROSITE" id="PS00905">
    <property type="entry name" value="GTP1_OBG"/>
    <property type="match status" value="1"/>
</dbReference>
<dbReference type="PROSITE" id="PS51883">
    <property type="entry name" value="OBG"/>
    <property type="match status" value="1"/>
</dbReference>
<dbReference type="PROSITE" id="PS51881">
    <property type="entry name" value="OCT"/>
    <property type="match status" value="1"/>
</dbReference>
<name>OBG_MYCBO</name>
<sequence length="479" mass="50461">MPRFVDRVVIHTRAGSGGNGCASVHREKFKPLGGPDGGNGGRGGSIVFVVDPQVHTLLDFHFRPHLTAASGKHGMGNNRDGAAGADLEVKVPEGTVVLDENGRLLADLVGAGTRFEAAAGGRGGLGNAALASRVRKAPGFALLGEKGQSRDLTLELKTVADVGLVGFPSAGKSSLVSAISAAKPKIADYPFTTLVPNLGVVSAGEHAFTVADVPGLIPGASRGRGLGLDFLRHIERCAVLVHVVDCATAEPGRDPISDIDALETELACYTPTLQGDAALGDLAARPRAVVLNKIDVPEARELAEFVRDDIAQRGWPVFCVSTATRENLQPLIFGLSQMISDYNAARPVAVPRRPVIRPIPVDDSGFTVEPDGHGGFVVSGARPERWIDQTNFDNDEAVGYLADRLARLGVEEELLRLGARSGCAVTIGEMTFDWEPQTPAGEPVAMSGRGTDPRLDSNKRVGAAERKAARSRRREHGDG</sequence>
<protein>
    <recommendedName>
        <fullName evidence="1">GTPase Obg</fullName>
        <ecNumber evidence="1">3.6.5.-</ecNumber>
    </recommendedName>
    <alternativeName>
        <fullName evidence="1">GTP-binding protein Obg</fullName>
    </alternativeName>
</protein>
<proteinExistence type="inferred from homology"/>
<comment type="function">
    <text evidence="1">An essential GTPase which binds GTP, GDP and possibly (p)ppGpp with moderate affinity, with high nucleotide exchange rates and a fairly low GTP hydrolysis rate. Plays a role in control of the cell cycle, stress response, ribosome biogenesis and in those bacteria that undergo differentiation, in morphogenesis control.</text>
</comment>
<comment type="cofactor">
    <cofactor evidence="1">
        <name>Mg(2+)</name>
        <dbReference type="ChEBI" id="CHEBI:18420"/>
    </cofactor>
</comment>
<comment type="subunit">
    <text evidence="1">Monomer.</text>
</comment>
<comment type="subcellular location">
    <subcellularLocation>
        <location evidence="1">Cytoplasm</location>
    </subcellularLocation>
</comment>
<comment type="similarity">
    <text evidence="1">Belongs to the TRAFAC class OBG-HflX-like GTPase superfamily. OBG GTPase family.</text>
</comment>
<accession>Q7TYK5</accession>
<accession>A0A1R3Y190</accession>
<accession>X2BL33</accession>
<reference key="1">
    <citation type="journal article" date="2003" name="Proc. Natl. Acad. Sci. U.S.A.">
        <title>The complete genome sequence of Mycobacterium bovis.</title>
        <authorList>
            <person name="Garnier T."/>
            <person name="Eiglmeier K."/>
            <person name="Camus J.-C."/>
            <person name="Medina N."/>
            <person name="Mansoor H."/>
            <person name="Pryor M."/>
            <person name="Duthoy S."/>
            <person name="Grondin S."/>
            <person name="Lacroix C."/>
            <person name="Monsempe C."/>
            <person name="Simon S."/>
            <person name="Harris B."/>
            <person name="Atkin R."/>
            <person name="Doggett J."/>
            <person name="Mayes R."/>
            <person name="Keating L."/>
            <person name="Wheeler P.R."/>
            <person name="Parkhill J."/>
            <person name="Barrell B.G."/>
            <person name="Cole S.T."/>
            <person name="Gordon S.V."/>
            <person name="Hewinson R.G."/>
        </authorList>
    </citation>
    <scope>NUCLEOTIDE SEQUENCE [LARGE SCALE GENOMIC DNA]</scope>
    <source>
        <strain>ATCC BAA-935 / AF2122/97</strain>
    </source>
</reference>
<reference key="2">
    <citation type="journal article" date="2017" name="Genome Announc.">
        <title>Updated reference genome sequence and annotation of Mycobacterium bovis AF2122/97.</title>
        <authorList>
            <person name="Malone K.M."/>
            <person name="Farrell D."/>
            <person name="Stuber T.P."/>
            <person name="Schubert O.T."/>
            <person name="Aebersold R."/>
            <person name="Robbe-Austerman S."/>
            <person name="Gordon S.V."/>
        </authorList>
    </citation>
    <scope>NUCLEOTIDE SEQUENCE [LARGE SCALE GENOMIC DNA]</scope>
    <scope>GENOME REANNOTATION</scope>
    <source>
        <strain>ATCC BAA-935 / AF2122/97</strain>
    </source>
</reference>
<organism>
    <name type="scientific">Mycobacterium bovis (strain ATCC BAA-935 / AF2122/97)</name>
    <dbReference type="NCBI Taxonomy" id="233413"/>
    <lineage>
        <taxon>Bacteria</taxon>
        <taxon>Bacillati</taxon>
        <taxon>Actinomycetota</taxon>
        <taxon>Actinomycetes</taxon>
        <taxon>Mycobacteriales</taxon>
        <taxon>Mycobacteriaceae</taxon>
        <taxon>Mycobacterium</taxon>
        <taxon>Mycobacterium tuberculosis complex</taxon>
    </lineage>
</organism>
<keyword id="KW-0963">Cytoplasm</keyword>
<keyword id="KW-0342">GTP-binding</keyword>
<keyword id="KW-0378">Hydrolase</keyword>
<keyword id="KW-0460">Magnesium</keyword>
<keyword id="KW-0479">Metal-binding</keyword>
<keyword id="KW-0547">Nucleotide-binding</keyword>
<keyword id="KW-1185">Reference proteome</keyword>
<evidence type="ECO:0000255" key="1">
    <source>
        <dbReference type="HAMAP-Rule" id="MF_01454"/>
    </source>
</evidence>
<evidence type="ECO:0000255" key="2">
    <source>
        <dbReference type="PROSITE-ProRule" id="PRU01229"/>
    </source>
</evidence>
<evidence type="ECO:0000255" key="3">
    <source>
        <dbReference type="PROSITE-ProRule" id="PRU01231"/>
    </source>
</evidence>
<evidence type="ECO:0000256" key="4">
    <source>
        <dbReference type="SAM" id="MobiDB-lite"/>
    </source>
</evidence>
<feature type="chain" id="PRO_0000386051" description="GTPase Obg">
    <location>
        <begin position="1"/>
        <end position="479"/>
    </location>
</feature>
<feature type="domain" description="Obg" evidence="3">
    <location>
        <begin position="2"/>
        <end position="159"/>
    </location>
</feature>
<feature type="domain" description="OBG-type G" evidence="1">
    <location>
        <begin position="160"/>
        <end position="340"/>
    </location>
</feature>
<feature type="domain" description="OCT" evidence="2">
    <location>
        <begin position="358"/>
        <end position="436"/>
    </location>
</feature>
<feature type="region of interest" description="Disordered" evidence="4">
    <location>
        <begin position="434"/>
        <end position="479"/>
    </location>
</feature>
<feature type="compositionally biased region" description="Basic and acidic residues" evidence="4">
    <location>
        <begin position="451"/>
        <end position="468"/>
    </location>
</feature>
<feature type="compositionally biased region" description="Basic residues" evidence="4">
    <location>
        <begin position="469"/>
        <end position="479"/>
    </location>
</feature>
<feature type="binding site" evidence="1">
    <location>
        <begin position="166"/>
        <end position="173"/>
    </location>
    <ligand>
        <name>GTP</name>
        <dbReference type="ChEBI" id="CHEBI:37565"/>
    </ligand>
</feature>
<feature type="binding site" evidence="1">
    <location>
        <position position="173"/>
    </location>
    <ligand>
        <name>Mg(2+)</name>
        <dbReference type="ChEBI" id="CHEBI:18420"/>
    </ligand>
</feature>
<feature type="binding site" evidence="1">
    <location>
        <begin position="191"/>
        <end position="195"/>
    </location>
    <ligand>
        <name>GTP</name>
        <dbReference type="ChEBI" id="CHEBI:37565"/>
    </ligand>
</feature>
<feature type="binding site" evidence="1">
    <location>
        <position position="193"/>
    </location>
    <ligand>
        <name>Mg(2+)</name>
        <dbReference type="ChEBI" id="CHEBI:18420"/>
    </ligand>
</feature>
<feature type="binding site" evidence="1">
    <location>
        <begin position="212"/>
        <end position="215"/>
    </location>
    <ligand>
        <name>GTP</name>
        <dbReference type="ChEBI" id="CHEBI:37565"/>
    </ligand>
</feature>
<feature type="binding site" evidence="1">
    <location>
        <begin position="292"/>
        <end position="295"/>
    </location>
    <ligand>
        <name>GTP</name>
        <dbReference type="ChEBI" id="CHEBI:37565"/>
    </ligand>
</feature>
<feature type="binding site" evidence="1">
    <location>
        <begin position="321"/>
        <end position="323"/>
    </location>
    <ligand>
        <name>GTP</name>
        <dbReference type="ChEBI" id="CHEBI:37565"/>
    </ligand>
</feature>
<gene>
    <name evidence="1" type="primary">obg</name>
    <name type="ordered locus">BQ2027_MB2467C</name>
</gene>